<dbReference type="EMBL" id="CU928161">
    <property type="protein sequence ID" value="CAR04910.1"/>
    <property type="molecule type" value="Genomic_DNA"/>
</dbReference>
<dbReference type="RefSeq" id="WP_000062611.1">
    <property type="nucleotide sequence ID" value="NC_011742.1"/>
</dbReference>
<dbReference type="EMDB" id="EMD-4126"/>
<dbReference type="EMDB" id="EMD-7014"/>
<dbReference type="EMDB" id="EMD-7015"/>
<dbReference type="EMDB" id="EMD-7016"/>
<dbReference type="EMDB" id="EMD-7970"/>
<dbReference type="EMDB" id="EMD-8621"/>
<dbReference type="EMDB" id="EMD-8826"/>
<dbReference type="EMDB" id="EMD-8829"/>
<dbReference type="SMR" id="B7MCS1"/>
<dbReference type="IntAct" id="B7MCS1">
    <property type="interactions" value="1"/>
</dbReference>
<dbReference type="GeneID" id="93778681"/>
<dbReference type="KEGG" id="ecz:ECS88_3693"/>
<dbReference type="HOGENOM" id="CLU_098428_0_0_6"/>
<dbReference type="Proteomes" id="UP000000747">
    <property type="component" value="Chromosome"/>
</dbReference>
<dbReference type="GO" id="GO:1990904">
    <property type="term" value="C:ribonucleoprotein complex"/>
    <property type="evidence" value="ECO:0007669"/>
    <property type="project" value="UniProtKB-KW"/>
</dbReference>
<dbReference type="GO" id="GO:0005840">
    <property type="term" value="C:ribosome"/>
    <property type="evidence" value="ECO:0007669"/>
    <property type="project" value="UniProtKB-KW"/>
</dbReference>
<dbReference type="GO" id="GO:0019843">
    <property type="term" value="F:rRNA binding"/>
    <property type="evidence" value="ECO:0007669"/>
    <property type="project" value="UniProtKB-UniRule"/>
</dbReference>
<dbReference type="GO" id="GO:0003735">
    <property type="term" value="F:structural constituent of ribosome"/>
    <property type="evidence" value="ECO:0007669"/>
    <property type="project" value="InterPro"/>
</dbReference>
<dbReference type="GO" id="GO:0006412">
    <property type="term" value="P:translation"/>
    <property type="evidence" value="ECO:0007669"/>
    <property type="project" value="UniProtKB-UniRule"/>
</dbReference>
<dbReference type="FunFam" id="3.30.1370.30:FF:000003">
    <property type="entry name" value="30S ribosomal protein S8"/>
    <property type="match status" value="1"/>
</dbReference>
<dbReference type="FunFam" id="3.30.1490.10:FF:000001">
    <property type="entry name" value="30S ribosomal protein S8"/>
    <property type="match status" value="1"/>
</dbReference>
<dbReference type="Gene3D" id="3.30.1370.30">
    <property type="match status" value="1"/>
</dbReference>
<dbReference type="Gene3D" id="3.30.1490.10">
    <property type="match status" value="1"/>
</dbReference>
<dbReference type="HAMAP" id="MF_01302_B">
    <property type="entry name" value="Ribosomal_uS8_B"/>
    <property type="match status" value="1"/>
</dbReference>
<dbReference type="InterPro" id="IPR000630">
    <property type="entry name" value="Ribosomal_uS8"/>
</dbReference>
<dbReference type="InterPro" id="IPR047863">
    <property type="entry name" value="Ribosomal_uS8_CS"/>
</dbReference>
<dbReference type="InterPro" id="IPR035987">
    <property type="entry name" value="Ribosomal_uS8_sf"/>
</dbReference>
<dbReference type="NCBIfam" id="NF001109">
    <property type="entry name" value="PRK00136.1"/>
    <property type="match status" value="1"/>
</dbReference>
<dbReference type="PANTHER" id="PTHR11758">
    <property type="entry name" value="40S RIBOSOMAL PROTEIN S15A"/>
    <property type="match status" value="1"/>
</dbReference>
<dbReference type="Pfam" id="PF00410">
    <property type="entry name" value="Ribosomal_S8"/>
    <property type="match status" value="1"/>
</dbReference>
<dbReference type="SUPFAM" id="SSF56047">
    <property type="entry name" value="Ribosomal protein S8"/>
    <property type="match status" value="1"/>
</dbReference>
<dbReference type="PROSITE" id="PS00053">
    <property type="entry name" value="RIBOSOMAL_S8"/>
    <property type="match status" value="1"/>
</dbReference>
<evidence type="ECO:0000255" key="1">
    <source>
        <dbReference type="HAMAP-Rule" id="MF_01302"/>
    </source>
</evidence>
<evidence type="ECO:0000305" key="2"/>
<proteinExistence type="inferred from homology"/>
<keyword id="KW-1185">Reference proteome</keyword>
<keyword id="KW-0687">Ribonucleoprotein</keyword>
<keyword id="KW-0689">Ribosomal protein</keyword>
<keyword id="KW-0694">RNA-binding</keyword>
<keyword id="KW-0699">rRNA-binding</keyword>
<comment type="function">
    <text evidence="1">One of the primary rRNA binding proteins, it binds directly to 16S rRNA central domain where it helps coordinate assembly of the platform of the 30S subunit.</text>
</comment>
<comment type="subunit">
    <text evidence="1">Part of the 30S ribosomal subunit. Contacts proteins S5 and S12.</text>
</comment>
<comment type="similarity">
    <text evidence="1">Belongs to the universal ribosomal protein uS8 family.</text>
</comment>
<accession>B7MCS1</accession>
<name>RS8_ECO45</name>
<feature type="chain" id="PRO_1000140547" description="Small ribosomal subunit protein uS8">
    <location>
        <begin position="1"/>
        <end position="130"/>
    </location>
</feature>
<sequence>MSMQDPIADMLTRIRNGQAANKAAVTMPSSKLKVAIANVLKEEGFIEDFKVEGDTKPELELTLKYFQGKAVVESIQRVSRPGLRIYKRKDELPKVMAGLGIAVVSTSKGVMTDRAARQAGLGGEIICYVA</sequence>
<protein>
    <recommendedName>
        <fullName evidence="1">Small ribosomal subunit protein uS8</fullName>
    </recommendedName>
    <alternativeName>
        <fullName evidence="2">30S ribosomal protein S8</fullName>
    </alternativeName>
</protein>
<gene>
    <name evidence="1" type="primary">rpsH</name>
    <name type="ordered locus">ECS88_3693</name>
</gene>
<organism>
    <name type="scientific">Escherichia coli O45:K1 (strain S88 / ExPEC)</name>
    <dbReference type="NCBI Taxonomy" id="585035"/>
    <lineage>
        <taxon>Bacteria</taxon>
        <taxon>Pseudomonadati</taxon>
        <taxon>Pseudomonadota</taxon>
        <taxon>Gammaproteobacteria</taxon>
        <taxon>Enterobacterales</taxon>
        <taxon>Enterobacteriaceae</taxon>
        <taxon>Escherichia</taxon>
    </lineage>
</organism>
<reference key="1">
    <citation type="journal article" date="2009" name="PLoS Genet.">
        <title>Organised genome dynamics in the Escherichia coli species results in highly diverse adaptive paths.</title>
        <authorList>
            <person name="Touchon M."/>
            <person name="Hoede C."/>
            <person name="Tenaillon O."/>
            <person name="Barbe V."/>
            <person name="Baeriswyl S."/>
            <person name="Bidet P."/>
            <person name="Bingen E."/>
            <person name="Bonacorsi S."/>
            <person name="Bouchier C."/>
            <person name="Bouvet O."/>
            <person name="Calteau A."/>
            <person name="Chiapello H."/>
            <person name="Clermont O."/>
            <person name="Cruveiller S."/>
            <person name="Danchin A."/>
            <person name="Diard M."/>
            <person name="Dossat C."/>
            <person name="Karoui M.E."/>
            <person name="Frapy E."/>
            <person name="Garry L."/>
            <person name="Ghigo J.M."/>
            <person name="Gilles A.M."/>
            <person name="Johnson J."/>
            <person name="Le Bouguenec C."/>
            <person name="Lescat M."/>
            <person name="Mangenot S."/>
            <person name="Martinez-Jehanne V."/>
            <person name="Matic I."/>
            <person name="Nassif X."/>
            <person name="Oztas S."/>
            <person name="Petit M.A."/>
            <person name="Pichon C."/>
            <person name="Rouy Z."/>
            <person name="Ruf C.S."/>
            <person name="Schneider D."/>
            <person name="Tourret J."/>
            <person name="Vacherie B."/>
            <person name="Vallenet D."/>
            <person name="Medigue C."/>
            <person name="Rocha E.P.C."/>
            <person name="Denamur E."/>
        </authorList>
    </citation>
    <scope>NUCLEOTIDE SEQUENCE [LARGE SCALE GENOMIC DNA]</scope>
    <source>
        <strain>S88 / ExPEC</strain>
    </source>
</reference>